<accession>P65922</accession>
<accession>Q8XEN5</accession>
<sequence length="545" mass="60122">MTTNYIFVTGGVVSSLGKGIAAASLAAILEARGLNVTIMKLDPYINVDPGTMSPIQHGEVFVTEDGAETDLDLGHYERFIRTKMSRRNNFTTGRIYSDVLRKERRGDYLGATVQVIPHITNAIKERVLEGGEGHDVVLVEIGGTVGDIESLPFLEAIRQLAVDIGREHALFMHLTLVPYLAAAGEVKTKPTQHSVKELLSIGIQPDILICRSDRAVPANERAKIALFCNVPEKAVISMKDVDSIYKIPGLLKSQGLDDYICKRFSLNCPEANLSEWEQVIYEEANPAGEVTIGMVGKYIELPDAYKSVIEALKHGGLKNRVTVNIKLIDSQDVETRGVEILKDLDAILIPGGFGYRGVEGKIATARYARENNIPYLGICLGMQVALIEFARNVAGMDNANSTEFVPDCKYPVVALITEWRDEDGNVEVRSEKSDLGGTMRLGAQQCQLSDDSLVRQLYGASTIVERHRHRYEVNNMLLKQIEAAGLRVAGRSGDDQLVEIIEVPNHPWFVACQFHPEFTSTPRDGHPLFAGFVKAANEHQKRQAK</sequence>
<evidence type="ECO:0000250" key="1"/>
<evidence type="ECO:0000255" key="2">
    <source>
        <dbReference type="HAMAP-Rule" id="MF_01227"/>
    </source>
</evidence>
<feature type="initiator methionine" description="Removed" evidence="1">
    <location>
        <position position="1"/>
    </location>
</feature>
<feature type="chain" id="PRO_0000138218" description="CTP synthase">
    <location>
        <begin position="2"/>
        <end position="545"/>
    </location>
</feature>
<feature type="domain" description="Glutamine amidotransferase type-1" evidence="2">
    <location>
        <begin position="291"/>
        <end position="542"/>
    </location>
</feature>
<feature type="region of interest" description="Amidoligase domain" evidence="2">
    <location>
        <begin position="2"/>
        <end position="266"/>
    </location>
</feature>
<feature type="active site" description="Nucleophile; for glutamine hydrolysis" evidence="2">
    <location>
        <position position="379"/>
    </location>
</feature>
<feature type="active site" evidence="2">
    <location>
        <position position="515"/>
    </location>
</feature>
<feature type="active site" evidence="2">
    <location>
        <position position="517"/>
    </location>
</feature>
<feature type="binding site" evidence="2">
    <location>
        <position position="14"/>
    </location>
    <ligand>
        <name>CTP</name>
        <dbReference type="ChEBI" id="CHEBI:37563"/>
        <note>allosteric inhibitor</note>
    </ligand>
</feature>
<feature type="binding site" evidence="2">
    <location>
        <position position="14"/>
    </location>
    <ligand>
        <name>UTP</name>
        <dbReference type="ChEBI" id="CHEBI:46398"/>
    </ligand>
</feature>
<feature type="binding site" evidence="2">
    <location>
        <begin position="15"/>
        <end position="20"/>
    </location>
    <ligand>
        <name>ATP</name>
        <dbReference type="ChEBI" id="CHEBI:30616"/>
    </ligand>
</feature>
<feature type="binding site" evidence="2">
    <location>
        <position position="72"/>
    </location>
    <ligand>
        <name>ATP</name>
        <dbReference type="ChEBI" id="CHEBI:30616"/>
    </ligand>
</feature>
<feature type="binding site" evidence="2">
    <location>
        <position position="72"/>
    </location>
    <ligand>
        <name>Mg(2+)</name>
        <dbReference type="ChEBI" id="CHEBI:18420"/>
    </ligand>
</feature>
<feature type="binding site" evidence="2">
    <location>
        <position position="140"/>
    </location>
    <ligand>
        <name>Mg(2+)</name>
        <dbReference type="ChEBI" id="CHEBI:18420"/>
    </ligand>
</feature>
<feature type="binding site" evidence="2">
    <location>
        <begin position="147"/>
        <end position="149"/>
    </location>
    <ligand>
        <name>CTP</name>
        <dbReference type="ChEBI" id="CHEBI:37563"/>
        <note>allosteric inhibitor</note>
    </ligand>
</feature>
<feature type="binding site" evidence="2">
    <location>
        <begin position="187"/>
        <end position="192"/>
    </location>
    <ligand>
        <name>CTP</name>
        <dbReference type="ChEBI" id="CHEBI:37563"/>
        <note>allosteric inhibitor</note>
    </ligand>
</feature>
<feature type="binding site" evidence="2">
    <location>
        <begin position="187"/>
        <end position="192"/>
    </location>
    <ligand>
        <name>UTP</name>
        <dbReference type="ChEBI" id="CHEBI:46398"/>
    </ligand>
</feature>
<feature type="binding site" evidence="2">
    <location>
        <position position="223"/>
    </location>
    <ligand>
        <name>CTP</name>
        <dbReference type="ChEBI" id="CHEBI:37563"/>
        <note>allosteric inhibitor</note>
    </ligand>
</feature>
<feature type="binding site" evidence="2">
    <location>
        <position position="223"/>
    </location>
    <ligand>
        <name>UTP</name>
        <dbReference type="ChEBI" id="CHEBI:46398"/>
    </ligand>
</feature>
<feature type="binding site" evidence="2">
    <location>
        <begin position="239"/>
        <end position="241"/>
    </location>
    <ligand>
        <name>ATP</name>
        <dbReference type="ChEBI" id="CHEBI:30616"/>
    </ligand>
</feature>
<feature type="binding site" evidence="2">
    <location>
        <position position="352"/>
    </location>
    <ligand>
        <name>L-glutamine</name>
        <dbReference type="ChEBI" id="CHEBI:58359"/>
    </ligand>
</feature>
<feature type="binding site" evidence="2">
    <location>
        <begin position="380"/>
        <end position="383"/>
    </location>
    <ligand>
        <name>L-glutamine</name>
        <dbReference type="ChEBI" id="CHEBI:58359"/>
    </ligand>
</feature>
<feature type="binding site" evidence="2">
    <location>
        <position position="403"/>
    </location>
    <ligand>
        <name>L-glutamine</name>
        <dbReference type="ChEBI" id="CHEBI:58359"/>
    </ligand>
</feature>
<feature type="binding site" evidence="2">
    <location>
        <position position="470"/>
    </location>
    <ligand>
        <name>L-glutamine</name>
        <dbReference type="ChEBI" id="CHEBI:58359"/>
    </ligand>
</feature>
<protein>
    <recommendedName>
        <fullName evidence="2">CTP synthase</fullName>
        <ecNumber evidence="2">6.3.4.2</ecNumber>
    </recommendedName>
    <alternativeName>
        <fullName evidence="2">Cytidine 5'-triphosphate synthase</fullName>
    </alternativeName>
    <alternativeName>
        <fullName evidence="2">Cytidine triphosphate synthetase</fullName>
        <shortName evidence="2">CTP synthetase</shortName>
        <shortName evidence="2">CTPS</shortName>
    </alternativeName>
    <alternativeName>
        <fullName evidence="2">UTP--ammonia ligase</fullName>
    </alternativeName>
</protein>
<name>PYRG_SALTI</name>
<reference key="1">
    <citation type="journal article" date="2001" name="Nature">
        <title>Complete genome sequence of a multiple drug resistant Salmonella enterica serovar Typhi CT18.</title>
        <authorList>
            <person name="Parkhill J."/>
            <person name="Dougan G."/>
            <person name="James K.D."/>
            <person name="Thomson N.R."/>
            <person name="Pickard D."/>
            <person name="Wain J."/>
            <person name="Churcher C.M."/>
            <person name="Mungall K.L."/>
            <person name="Bentley S.D."/>
            <person name="Holden M.T.G."/>
            <person name="Sebaihia M."/>
            <person name="Baker S."/>
            <person name="Basham D."/>
            <person name="Brooks K."/>
            <person name="Chillingworth T."/>
            <person name="Connerton P."/>
            <person name="Cronin A."/>
            <person name="Davis P."/>
            <person name="Davies R.M."/>
            <person name="Dowd L."/>
            <person name="White N."/>
            <person name="Farrar J."/>
            <person name="Feltwell T."/>
            <person name="Hamlin N."/>
            <person name="Haque A."/>
            <person name="Hien T.T."/>
            <person name="Holroyd S."/>
            <person name="Jagels K."/>
            <person name="Krogh A."/>
            <person name="Larsen T.S."/>
            <person name="Leather S."/>
            <person name="Moule S."/>
            <person name="O'Gaora P."/>
            <person name="Parry C."/>
            <person name="Quail M.A."/>
            <person name="Rutherford K.M."/>
            <person name="Simmonds M."/>
            <person name="Skelton J."/>
            <person name="Stevens K."/>
            <person name="Whitehead S."/>
            <person name="Barrell B.G."/>
        </authorList>
    </citation>
    <scope>NUCLEOTIDE SEQUENCE [LARGE SCALE GENOMIC DNA]</scope>
    <source>
        <strain>CT18</strain>
    </source>
</reference>
<reference key="2">
    <citation type="journal article" date="2003" name="J. Bacteriol.">
        <title>Comparative genomics of Salmonella enterica serovar Typhi strains Ty2 and CT18.</title>
        <authorList>
            <person name="Deng W."/>
            <person name="Liou S.-R."/>
            <person name="Plunkett G. III"/>
            <person name="Mayhew G.F."/>
            <person name="Rose D.J."/>
            <person name="Burland V."/>
            <person name="Kodoyianni V."/>
            <person name="Schwartz D.C."/>
            <person name="Blattner F.R."/>
        </authorList>
    </citation>
    <scope>NUCLEOTIDE SEQUENCE [LARGE SCALE GENOMIC DNA]</scope>
    <source>
        <strain>ATCC 700931 / Ty2</strain>
    </source>
</reference>
<gene>
    <name evidence="2" type="primary">pyrG</name>
    <name type="ordered locus">STY3082</name>
    <name type="ordered locus">t2854</name>
</gene>
<dbReference type="EC" id="6.3.4.2" evidence="2"/>
<dbReference type="EMBL" id="AL513382">
    <property type="protein sequence ID" value="CAD06059.1"/>
    <property type="molecule type" value="Genomic_DNA"/>
</dbReference>
<dbReference type="EMBL" id="AE014613">
    <property type="protein sequence ID" value="AAO70411.1"/>
    <property type="molecule type" value="Genomic_DNA"/>
</dbReference>
<dbReference type="RefSeq" id="NP_457342.1">
    <property type="nucleotide sequence ID" value="NC_003198.1"/>
</dbReference>
<dbReference type="RefSeq" id="WP_000210863.1">
    <property type="nucleotide sequence ID" value="NZ_WSUR01000005.1"/>
</dbReference>
<dbReference type="SMR" id="P65922"/>
<dbReference type="STRING" id="220341.gene:17586969"/>
<dbReference type="KEGG" id="stt:t2854"/>
<dbReference type="KEGG" id="sty:STY3082"/>
<dbReference type="PATRIC" id="fig|220341.7.peg.3136"/>
<dbReference type="eggNOG" id="COG0504">
    <property type="taxonomic scope" value="Bacteria"/>
</dbReference>
<dbReference type="HOGENOM" id="CLU_011675_5_0_6"/>
<dbReference type="OMA" id="EFNNAYR"/>
<dbReference type="OrthoDB" id="9801107at2"/>
<dbReference type="UniPathway" id="UPA00159">
    <property type="reaction ID" value="UER00277"/>
</dbReference>
<dbReference type="Proteomes" id="UP000000541">
    <property type="component" value="Chromosome"/>
</dbReference>
<dbReference type="Proteomes" id="UP000002670">
    <property type="component" value="Chromosome"/>
</dbReference>
<dbReference type="GO" id="GO:0005829">
    <property type="term" value="C:cytosol"/>
    <property type="evidence" value="ECO:0007669"/>
    <property type="project" value="TreeGrafter"/>
</dbReference>
<dbReference type="GO" id="GO:0005524">
    <property type="term" value="F:ATP binding"/>
    <property type="evidence" value="ECO:0007669"/>
    <property type="project" value="UniProtKB-KW"/>
</dbReference>
<dbReference type="GO" id="GO:0003883">
    <property type="term" value="F:CTP synthase activity"/>
    <property type="evidence" value="ECO:0007669"/>
    <property type="project" value="UniProtKB-UniRule"/>
</dbReference>
<dbReference type="GO" id="GO:0004359">
    <property type="term" value="F:glutaminase activity"/>
    <property type="evidence" value="ECO:0007669"/>
    <property type="project" value="RHEA"/>
</dbReference>
<dbReference type="GO" id="GO:0042802">
    <property type="term" value="F:identical protein binding"/>
    <property type="evidence" value="ECO:0007669"/>
    <property type="project" value="TreeGrafter"/>
</dbReference>
<dbReference type="GO" id="GO:0046872">
    <property type="term" value="F:metal ion binding"/>
    <property type="evidence" value="ECO:0007669"/>
    <property type="project" value="UniProtKB-KW"/>
</dbReference>
<dbReference type="GO" id="GO:0044210">
    <property type="term" value="P:'de novo' CTP biosynthetic process"/>
    <property type="evidence" value="ECO:0007669"/>
    <property type="project" value="UniProtKB-UniRule"/>
</dbReference>
<dbReference type="GO" id="GO:0019856">
    <property type="term" value="P:pyrimidine nucleobase biosynthetic process"/>
    <property type="evidence" value="ECO:0007669"/>
    <property type="project" value="TreeGrafter"/>
</dbReference>
<dbReference type="CDD" id="cd03113">
    <property type="entry name" value="CTPS_N"/>
    <property type="match status" value="1"/>
</dbReference>
<dbReference type="CDD" id="cd01746">
    <property type="entry name" value="GATase1_CTP_Synthase"/>
    <property type="match status" value="1"/>
</dbReference>
<dbReference type="FunFam" id="3.40.50.300:FF:000009">
    <property type="entry name" value="CTP synthase"/>
    <property type="match status" value="1"/>
</dbReference>
<dbReference type="FunFam" id="3.40.50.880:FF:000002">
    <property type="entry name" value="CTP synthase"/>
    <property type="match status" value="1"/>
</dbReference>
<dbReference type="Gene3D" id="3.40.50.880">
    <property type="match status" value="1"/>
</dbReference>
<dbReference type="Gene3D" id="3.40.50.300">
    <property type="entry name" value="P-loop containing nucleotide triphosphate hydrolases"/>
    <property type="match status" value="1"/>
</dbReference>
<dbReference type="HAMAP" id="MF_01227">
    <property type="entry name" value="PyrG"/>
    <property type="match status" value="1"/>
</dbReference>
<dbReference type="InterPro" id="IPR029062">
    <property type="entry name" value="Class_I_gatase-like"/>
</dbReference>
<dbReference type="InterPro" id="IPR004468">
    <property type="entry name" value="CTP_synthase"/>
</dbReference>
<dbReference type="InterPro" id="IPR017456">
    <property type="entry name" value="CTP_synthase_N"/>
</dbReference>
<dbReference type="InterPro" id="IPR017926">
    <property type="entry name" value="GATASE"/>
</dbReference>
<dbReference type="InterPro" id="IPR033828">
    <property type="entry name" value="GATase1_CTP_Synthase"/>
</dbReference>
<dbReference type="InterPro" id="IPR027417">
    <property type="entry name" value="P-loop_NTPase"/>
</dbReference>
<dbReference type="NCBIfam" id="NF003792">
    <property type="entry name" value="PRK05380.1"/>
    <property type="match status" value="1"/>
</dbReference>
<dbReference type="NCBIfam" id="TIGR00337">
    <property type="entry name" value="PyrG"/>
    <property type="match status" value="1"/>
</dbReference>
<dbReference type="PANTHER" id="PTHR11550">
    <property type="entry name" value="CTP SYNTHASE"/>
    <property type="match status" value="1"/>
</dbReference>
<dbReference type="PANTHER" id="PTHR11550:SF0">
    <property type="entry name" value="CTP SYNTHASE-RELATED"/>
    <property type="match status" value="1"/>
</dbReference>
<dbReference type="Pfam" id="PF06418">
    <property type="entry name" value="CTP_synth_N"/>
    <property type="match status" value="1"/>
</dbReference>
<dbReference type="Pfam" id="PF00117">
    <property type="entry name" value="GATase"/>
    <property type="match status" value="1"/>
</dbReference>
<dbReference type="SUPFAM" id="SSF52317">
    <property type="entry name" value="Class I glutamine amidotransferase-like"/>
    <property type="match status" value="1"/>
</dbReference>
<dbReference type="SUPFAM" id="SSF52540">
    <property type="entry name" value="P-loop containing nucleoside triphosphate hydrolases"/>
    <property type="match status" value="1"/>
</dbReference>
<dbReference type="PROSITE" id="PS51273">
    <property type="entry name" value="GATASE_TYPE_1"/>
    <property type="match status" value="1"/>
</dbReference>
<keyword id="KW-0067">ATP-binding</keyword>
<keyword id="KW-0315">Glutamine amidotransferase</keyword>
<keyword id="KW-0436">Ligase</keyword>
<keyword id="KW-0460">Magnesium</keyword>
<keyword id="KW-0479">Metal-binding</keyword>
<keyword id="KW-0547">Nucleotide-binding</keyword>
<keyword id="KW-0665">Pyrimidine biosynthesis</keyword>
<organism>
    <name type="scientific">Salmonella typhi</name>
    <dbReference type="NCBI Taxonomy" id="90370"/>
    <lineage>
        <taxon>Bacteria</taxon>
        <taxon>Pseudomonadati</taxon>
        <taxon>Pseudomonadota</taxon>
        <taxon>Gammaproteobacteria</taxon>
        <taxon>Enterobacterales</taxon>
        <taxon>Enterobacteriaceae</taxon>
        <taxon>Salmonella</taxon>
    </lineage>
</organism>
<proteinExistence type="inferred from homology"/>
<comment type="function">
    <text evidence="2">Catalyzes the ATP-dependent amination of UTP to CTP with either L-glutamine or ammonia as the source of nitrogen. Regulates intracellular CTP levels through interactions with the four ribonucleotide triphosphates.</text>
</comment>
<comment type="catalytic activity">
    <reaction evidence="2">
        <text>UTP + L-glutamine + ATP + H2O = CTP + L-glutamate + ADP + phosphate + 2 H(+)</text>
        <dbReference type="Rhea" id="RHEA:26426"/>
        <dbReference type="ChEBI" id="CHEBI:15377"/>
        <dbReference type="ChEBI" id="CHEBI:15378"/>
        <dbReference type="ChEBI" id="CHEBI:29985"/>
        <dbReference type="ChEBI" id="CHEBI:30616"/>
        <dbReference type="ChEBI" id="CHEBI:37563"/>
        <dbReference type="ChEBI" id="CHEBI:43474"/>
        <dbReference type="ChEBI" id="CHEBI:46398"/>
        <dbReference type="ChEBI" id="CHEBI:58359"/>
        <dbReference type="ChEBI" id="CHEBI:456216"/>
        <dbReference type="EC" id="6.3.4.2"/>
    </reaction>
</comment>
<comment type="catalytic activity">
    <reaction evidence="2">
        <text>L-glutamine + H2O = L-glutamate + NH4(+)</text>
        <dbReference type="Rhea" id="RHEA:15889"/>
        <dbReference type="ChEBI" id="CHEBI:15377"/>
        <dbReference type="ChEBI" id="CHEBI:28938"/>
        <dbReference type="ChEBI" id="CHEBI:29985"/>
        <dbReference type="ChEBI" id="CHEBI:58359"/>
    </reaction>
</comment>
<comment type="catalytic activity">
    <reaction evidence="2">
        <text>UTP + NH4(+) + ATP = CTP + ADP + phosphate + 2 H(+)</text>
        <dbReference type="Rhea" id="RHEA:16597"/>
        <dbReference type="ChEBI" id="CHEBI:15378"/>
        <dbReference type="ChEBI" id="CHEBI:28938"/>
        <dbReference type="ChEBI" id="CHEBI:30616"/>
        <dbReference type="ChEBI" id="CHEBI:37563"/>
        <dbReference type="ChEBI" id="CHEBI:43474"/>
        <dbReference type="ChEBI" id="CHEBI:46398"/>
        <dbReference type="ChEBI" id="CHEBI:456216"/>
    </reaction>
</comment>
<comment type="activity regulation">
    <text evidence="2">Allosterically activated by GTP, when glutamine is the substrate; GTP has no effect on the reaction when ammonia is the substrate. The allosteric effector GTP functions by stabilizing the protein conformation that binds the tetrahedral intermediate(s) formed during glutamine hydrolysis. Inhibited by the product CTP, via allosteric rather than competitive inhibition.</text>
</comment>
<comment type="pathway">
    <text evidence="2">Pyrimidine metabolism; CTP biosynthesis via de novo pathway; CTP from UDP: step 2/2.</text>
</comment>
<comment type="subunit">
    <text evidence="2">Homotetramer.</text>
</comment>
<comment type="miscellaneous">
    <text evidence="2">CTPSs have evolved a hybrid strategy for distinguishing between UTP and CTP. The overlapping regions of the product feedback inhibitory and substrate sites recognize a common feature in both compounds, the triphosphate moiety. To differentiate isosteric substrate and product pyrimidine rings, an additional pocket far from the expected kinase/ligase catalytic site, specifically recognizes the cytosine and ribose portions of the product inhibitor.</text>
</comment>
<comment type="similarity">
    <text evidence="2">Belongs to the CTP synthase family.</text>
</comment>